<keyword id="KW-0963">Cytoplasm</keyword>
<keyword id="KW-0418">Kinase</keyword>
<keyword id="KW-0597">Phosphoprotein</keyword>
<keyword id="KW-0598">Phosphotransferase system</keyword>
<keyword id="KW-1185">Reference proteome</keyword>
<keyword id="KW-0762">Sugar transport</keyword>
<keyword id="KW-0808">Transferase</keyword>
<keyword id="KW-0813">Transport</keyword>
<protein>
    <recommendedName>
        <fullName evidence="1">PTS system fructose-like EIIB component 2</fullName>
        <ecNumber evidence="1">2.7.1.202</ecNumber>
    </recommendedName>
    <alternativeName>
        <fullName evidence="1">Fructose-like phosphotransferase enzyme IIB component 2</fullName>
    </alternativeName>
</protein>
<reference key="1">
    <citation type="journal article" date="2001" name="Nature">
        <title>Genome sequence of enterohaemorrhagic Escherichia coli O157:H7.</title>
        <authorList>
            <person name="Perna N.T."/>
            <person name="Plunkett G. III"/>
            <person name="Burland V."/>
            <person name="Mau B."/>
            <person name="Glasner J.D."/>
            <person name="Rose D.J."/>
            <person name="Mayhew G.F."/>
            <person name="Evans P.S."/>
            <person name="Gregor J."/>
            <person name="Kirkpatrick H.A."/>
            <person name="Posfai G."/>
            <person name="Hackett J."/>
            <person name="Klink S."/>
            <person name="Boutin A."/>
            <person name="Shao Y."/>
            <person name="Miller L."/>
            <person name="Grotbeck E.J."/>
            <person name="Davis N.W."/>
            <person name="Lim A."/>
            <person name="Dimalanta E.T."/>
            <person name="Potamousis K."/>
            <person name="Apodaca J."/>
            <person name="Anantharaman T.S."/>
            <person name="Lin J."/>
            <person name="Yen G."/>
            <person name="Schwartz D.C."/>
            <person name="Welch R.A."/>
            <person name="Blattner F.R."/>
        </authorList>
    </citation>
    <scope>NUCLEOTIDE SEQUENCE [LARGE SCALE GENOMIC DNA]</scope>
    <source>
        <strain>O157:H7 / EDL933 / ATCC 700927 / EHEC</strain>
    </source>
</reference>
<reference key="2">
    <citation type="journal article" date="2001" name="DNA Res.">
        <title>Complete genome sequence of enterohemorrhagic Escherichia coli O157:H7 and genomic comparison with a laboratory strain K-12.</title>
        <authorList>
            <person name="Hayashi T."/>
            <person name="Makino K."/>
            <person name="Ohnishi M."/>
            <person name="Kurokawa K."/>
            <person name="Ishii K."/>
            <person name="Yokoyama K."/>
            <person name="Han C.-G."/>
            <person name="Ohtsubo E."/>
            <person name="Nakayama K."/>
            <person name="Murata T."/>
            <person name="Tanaka M."/>
            <person name="Tobe T."/>
            <person name="Iida T."/>
            <person name="Takami H."/>
            <person name="Honda T."/>
            <person name="Sasakawa C."/>
            <person name="Ogasawara N."/>
            <person name="Yasunaga T."/>
            <person name="Kuhara S."/>
            <person name="Shiba T."/>
            <person name="Hattori M."/>
            <person name="Shinagawa H."/>
        </authorList>
    </citation>
    <scope>NUCLEOTIDE SEQUENCE [LARGE SCALE GENOMIC DNA]</scope>
    <source>
        <strain>O157:H7 / Sakai / RIMD 0509952 / EHEC</strain>
    </source>
</reference>
<dbReference type="EC" id="2.7.1.202" evidence="1"/>
<dbReference type="EMBL" id="AE005174">
    <property type="protein sequence ID" value="AAG59152.1"/>
    <property type="molecule type" value="Genomic_DNA"/>
</dbReference>
<dbReference type="EMBL" id="BA000007">
    <property type="protein sequence ID" value="BAB38302.1"/>
    <property type="molecule type" value="Genomic_DNA"/>
</dbReference>
<dbReference type="PIR" id="D86086">
    <property type="entry name" value="D86086"/>
</dbReference>
<dbReference type="PIR" id="G91238">
    <property type="entry name" value="G91238"/>
</dbReference>
<dbReference type="RefSeq" id="NP_312906.1">
    <property type="nucleotide sequence ID" value="NC_002695.1"/>
</dbReference>
<dbReference type="RefSeq" id="WP_000161265.1">
    <property type="nucleotide sequence ID" value="NZ_VOAI01000032.1"/>
</dbReference>
<dbReference type="SMR" id="P69818"/>
<dbReference type="STRING" id="155864.Z5506"/>
<dbReference type="DNASU" id="960182"/>
<dbReference type="GeneID" id="915006"/>
<dbReference type="KEGG" id="ece:Z5506"/>
<dbReference type="KEGG" id="ecs:ECs_4879"/>
<dbReference type="PATRIC" id="fig|386585.9.peg.5103"/>
<dbReference type="eggNOG" id="COG1445">
    <property type="taxonomic scope" value="Bacteria"/>
</dbReference>
<dbReference type="HOGENOM" id="CLU_013155_2_1_6"/>
<dbReference type="OMA" id="TPHDIAQ"/>
<dbReference type="Proteomes" id="UP000000558">
    <property type="component" value="Chromosome"/>
</dbReference>
<dbReference type="Proteomes" id="UP000002519">
    <property type="component" value="Chromosome"/>
</dbReference>
<dbReference type="GO" id="GO:0005737">
    <property type="term" value="C:cytoplasm"/>
    <property type="evidence" value="ECO:0007669"/>
    <property type="project" value="UniProtKB-SubCell"/>
</dbReference>
<dbReference type="GO" id="GO:0005886">
    <property type="term" value="C:plasma membrane"/>
    <property type="evidence" value="ECO:0007669"/>
    <property type="project" value="TreeGrafter"/>
</dbReference>
<dbReference type="GO" id="GO:0016301">
    <property type="term" value="F:kinase activity"/>
    <property type="evidence" value="ECO:0007669"/>
    <property type="project" value="UniProtKB-KW"/>
</dbReference>
<dbReference type="GO" id="GO:0022877">
    <property type="term" value="F:protein-N(PI)-phosphohistidine-fructose phosphotransferase system transporter activity"/>
    <property type="evidence" value="ECO:0007669"/>
    <property type="project" value="InterPro"/>
</dbReference>
<dbReference type="GO" id="GO:0090582">
    <property type="term" value="F:protein-phosphocysteine-D-fructose-phosphotransferase system transporter activity"/>
    <property type="evidence" value="ECO:0000250"/>
    <property type="project" value="UniProtKB"/>
</dbReference>
<dbReference type="GO" id="GO:0009401">
    <property type="term" value="P:phosphoenolpyruvate-dependent sugar phosphotransferase system"/>
    <property type="evidence" value="ECO:0000250"/>
    <property type="project" value="UniProtKB"/>
</dbReference>
<dbReference type="CDD" id="cd05569">
    <property type="entry name" value="PTS_IIB_fructose"/>
    <property type="match status" value="1"/>
</dbReference>
<dbReference type="FunFam" id="3.40.50.2300:FF:000014">
    <property type="entry name" value="PTS system fructose-like transporter subunit IIB"/>
    <property type="match status" value="1"/>
</dbReference>
<dbReference type="Gene3D" id="3.40.50.2300">
    <property type="match status" value="1"/>
</dbReference>
<dbReference type="InterPro" id="IPR050864">
    <property type="entry name" value="Bacterial_PTS_Sugar_Transport"/>
</dbReference>
<dbReference type="InterPro" id="IPR036095">
    <property type="entry name" value="PTS_EIIB-like_sf"/>
</dbReference>
<dbReference type="InterPro" id="IPR013011">
    <property type="entry name" value="PTS_EIIB_2"/>
</dbReference>
<dbReference type="InterPro" id="IPR003501">
    <property type="entry name" value="PTS_EIIB_2/3"/>
</dbReference>
<dbReference type="InterPro" id="IPR003353">
    <property type="entry name" value="PTS_IIB_fruc"/>
</dbReference>
<dbReference type="NCBIfam" id="TIGR00829">
    <property type="entry name" value="FRU"/>
    <property type="match status" value="1"/>
</dbReference>
<dbReference type="NCBIfam" id="NF007783">
    <property type="entry name" value="PRK10474.1"/>
    <property type="match status" value="1"/>
</dbReference>
<dbReference type="PANTHER" id="PTHR30505">
    <property type="entry name" value="FRUCTOSE-LIKE PERMEASE"/>
    <property type="match status" value="1"/>
</dbReference>
<dbReference type="PANTHER" id="PTHR30505:SF0">
    <property type="entry name" value="FRUCTOSE-LIKE PTS SYSTEM EIIBC COMPONENT-RELATED"/>
    <property type="match status" value="1"/>
</dbReference>
<dbReference type="Pfam" id="PF02302">
    <property type="entry name" value="PTS_IIB"/>
    <property type="match status" value="1"/>
</dbReference>
<dbReference type="SUPFAM" id="SSF52794">
    <property type="entry name" value="PTS system IIB component-like"/>
    <property type="match status" value="1"/>
</dbReference>
<dbReference type="PROSITE" id="PS51099">
    <property type="entry name" value="PTS_EIIB_TYPE_2"/>
    <property type="match status" value="1"/>
</dbReference>
<organism>
    <name type="scientific">Escherichia coli O157:H7</name>
    <dbReference type="NCBI Taxonomy" id="83334"/>
    <lineage>
        <taxon>Bacteria</taxon>
        <taxon>Pseudomonadati</taxon>
        <taxon>Pseudomonadota</taxon>
        <taxon>Gammaproteobacteria</taxon>
        <taxon>Enterobacterales</taxon>
        <taxon>Enterobacteriaceae</taxon>
        <taxon>Escherichia</taxon>
    </lineage>
</organism>
<feature type="chain" id="PRO_0000186503" description="PTS system fructose-like EIIB component 2">
    <location>
        <begin position="1"/>
        <end position="106"/>
    </location>
</feature>
<feature type="domain" description="PTS EIIB type-2" evidence="2">
    <location>
        <begin position="1"/>
        <end position="103"/>
    </location>
</feature>
<feature type="active site" description="Phosphocysteine intermediate" evidence="1 3">
    <location>
        <position position="10"/>
    </location>
</feature>
<feature type="modified residue" description="Phosphocysteine; by EIIA" evidence="2">
    <location>
        <position position="10"/>
    </location>
</feature>
<name>PTFB2_ECO57</name>
<proteinExistence type="inferred from homology"/>
<evidence type="ECO:0000250" key="1">
    <source>
        <dbReference type="UniProtKB" id="P20966"/>
    </source>
</evidence>
<evidence type="ECO:0000255" key="2">
    <source>
        <dbReference type="PROSITE-ProRule" id="PRU00422"/>
    </source>
</evidence>
<evidence type="ECO:0000305" key="3"/>
<comment type="function">
    <text evidence="1">The phosphoenolpyruvate-dependent sugar phosphotransferase system (sugar PTS), a major carbohydrate active transport system, catalyzes the phosphorylation of incoming sugar substrates concomitantly with their translocation across the cell membrane. The enzyme II FrwABC PTS system is involved in fructose transport.</text>
</comment>
<comment type="catalytic activity">
    <reaction evidence="1">
        <text>D-fructose(out) + N(pros)-phospho-L-histidyl-[protein] = D-fructose 1-phosphate(in) + L-histidyl-[protein]</text>
        <dbReference type="Rhea" id="RHEA:49252"/>
        <dbReference type="Rhea" id="RHEA-COMP:9745"/>
        <dbReference type="Rhea" id="RHEA-COMP:9746"/>
        <dbReference type="ChEBI" id="CHEBI:29979"/>
        <dbReference type="ChEBI" id="CHEBI:37721"/>
        <dbReference type="ChEBI" id="CHEBI:58674"/>
        <dbReference type="ChEBI" id="CHEBI:64837"/>
        <dbReference type="EC" id="2.7.1.202"/>
    </reaction>
</comment>
<comment type="subcellular location">
    <subcellularLocation>
        <location evidence="3">Cytoplasm</location>
    </subcellularLocation>
</comment>
<comment type="domain">
    <text evidence="2">The PTS EIIB type-2 domain is phosphorylated by phospho-EIIA on a cysteinyl residue. Then, it transfers the phosphoryl group to the sugar substrate concomitantly with the sugar uptake processed by the PTS EIIC type-2 domain.</text>
</comment>
<gene>
    <name type="primary">frwB</name>
    <name type="ordered locus">Z5506</name>
    <name type="ordered locus">ECs4879</name>
</gene>
<sequence length="106" mass="11248">MTKIIAVTACPSGVAHTYMAAEALESAAKAKGWEVKVETQGSIGLENELTAEDVASADMVILTKDIGIKFEERFAGKTIVRVNISDAVKRADAIMSKIEAHLAQTA</sequence>
<accession>P69818</accession>
<accession>P32673</accession>